<evidence type="ECO:0000250" key="1"/>
<evidence type="ECO:0000255" key="2">
    <source>
        <dbReference type="PROSITE-ProRule" id="PRU00159"/>
    </source>
</evidence>
<evidence type="ECO:0000255" key="3">
    <source>
        <dbReference type="PROSITE-ProRule" id="PRU10027"/>
    </source>
</evidence>
<evidence type="ECO:0000256" key="4">
    <source>
        <dbReference type="SAM" id="MobiDB-lite"/>
    </source>
</evidence>
<evidence type="ECO:0000269" key="5">
    <source>
    </source>
</evidence>
<evidence type="ECO:0000303" key="6">
    <source ref="8"/>
</evidence>
<evidence type="ECO:0000305" key="7"/>
<evidence type="ECO:0000312" key="8">
    <source>
        <dbReference type="EMBL" id="AFK74500.1"/>
    </source>
</evidence>
<evidence type="ECO:0000312" key="9">
    <source>
        <dbReference type="EMBL" id="BAF06844.1"/>
    </source>
</evidence>
<evidence type="ECO:0000312" key="10">
    <source>
        <dbReference type="EMBL" id="EAZ14302.1"/>
    </source>
</evidence>
<name>SAPK4_ORYSJ</name>
<proteinExistence type="evidence at transcript level"/>
<protein>
    <recommendedName>
        <fullName>Serine/threonine-protein kinase SAPK4</fullName>
        <ecNumber>2.7.11.1</ecNumber>
    </recommendedName>
    <alternativeName>
        <fullName>Osmotic stress/abscisic acid-activated protein kinase 4</fullName>
    </alternativeName>
    <alternativeName>
        <fullName evidence="8">RK2 kinase</fullName>
    </alternativeName>
    <alternativeName>
        <fullName evidence="6">stress-activated protein kinase 4</fullName>
        <shortName evidence="6">OsSAPK4</shortName>
    </alternativeName>
</protein>
<sequence>MEKYEAVRDIGSGNFGVARLMRNRETRELVAVKCIERGHRIDENVYREIINHRSLRHPNIIRFKEVILTPTHLMIVMEFAAGGELFDRICDRGRFSEDEARYFFQQLICGVSYCHHMQICHRDLKLENVLLDGSPAPRLKICDFGYSKSSVLHSRPKSAVGTPAYIAPEVLSRREYDGKLADVWSCGVTLYVMLVGAYPFEDQDDPKNIRKTIQRIMSVQYKIPDYVHISAECKQLIARIFVNNPLRRITMKEIKSHPWFLKNLPRELTETAQAMYYRRDNSVPSFSDQTSEEIMKIVQEARTMPKSSRTGYWSDAGSDEEEKEEEERPEENEEEEEDEYDKRVKEVHASGELRMSSLRI</sequence>
<reference key="1">
    <citation type="journal article" date="2004" name="Plant Cell">
        <title>Differential activation of the rice sucrose nonfermenting1-related protein kinase2 family by hyperosmotic stress and abscisic acid.</title>
        <authorList>
            <person name="Kobayashi Y."/>
            <person name="Yamamoto S."/>
            <person name="Minami H."/>
            <person name="Kagaya Y."/>
            <person name="Hattori T."/>
        </authorList>
    </citation>
    <scope>NUCLEOTIDE SEQUENCE [MRNA]</scope>
    <scope>TISSUE SPECIFICITY</scope>
    <scope>INDUCTION</scope>
    <scope>NOMENCLATURE</scope>
    <source>
        <strain>cv. Nipponbare</strain>
    </source>
</reference>
<reference key="2">
    <citation type="submission" date="2011-11" db="EMBL/GenBank/DDBJ databases">
        <title>OSRK2 mRNA.</title>
        <authorList>
            <person name="Yoon I.S."/>
        </authorList>
    </citation>
    <scope>NUCLEOTIDE SEQUENCE [MRNA]</scope>
</reference>
<reference key="3">
    <citation type="journal article" date="2002" name="Nature">
        <title>The genome sequence and structure of rice chromosome 1.</title>
        <authorList>
            <person name="Sasaki T."/>
            <person name="Matsumoto T."/>
            <person name="Yamamoto K."/>
            <person name="Sakata K."/>
            <person name="Baba T."/>
            <person name="Katayose Y."/>
            <person name="Wu J."/>
            <person name="Niimura Y."/>
            <person name="Cheng Z."/>
            <person name="Nagamura Y."/>
            <person name="Antonio B.A."/>
            <person name="Kanamori H."/>
            <person name="Hosokawa S."/>
            <person name="Masukawa M."/>
            <person name="Arikawa K."/>
            <person name="Chiden Y."/>
            <person name="Hayashi M."/>
            <person name="Okamoto M."/>
            <person name="Ando T."/>
            <person name="Aoki H."/>
            <person name="Arita K."/>
            <person name="Hamada M."/>
            <person name="Harada C."/>
            <person name="Hijishita S."/>
            <person name="Honda M."/>
            <person name="Ichikawa Y."/>
            <person name="Idonuma A."/>
            <person name="Iijima M."/>
            <person name="Ikeda M."/>
            <person name="Ikeno M."/>
            <person name="Ito S."/>
            <person name="Ito T."/>
            <person name="Ito Y."/>
            <person name="Ito Y."/>
            <person name="Iwabuchi A."/>
            <person name="Kamiya K."/>
            <person name="Karasawa W."/>
            <person name="Katagiri S."/>
            <person name="Kikuta A."/>
            <person name="Kobayashi N."/>
            <person name="Kono I."/>
            <person name="Machita K."/>
            <person name="Maehara T."/>
            <person name="Mizuno H."/>
            <person name="Mizubayashi T."/>
            <person name="Mukai Y."/>
            <person name="Nagasaki H."/>
            <person name="Nakashima M."/>
            <person name="Nakama Y."/>
            <person name="Nakamichi Y."/>
            <person name="Nakamura M."/>
            <person name="Namiki N."/>
            <person name="Negishi M."/>
            <person name="Ohta I."/>
            <person name="Ono N."/>
            <person name="Saji S."/>
            <person name="Sakai K."/>
            <person name="Shibata M."/>
            <person name="Shimokawa T."/>
            <person name="Shomura A."/>
            <person name="Song J."/>
            <person name="Takazaki Y."/>
            <person name="Terasawa K."/>
            <person name="Tsuji K."/>
            <person name="Waki K."/>
            <person name="Yamagata H."/>
            <person name="Yamane H."/>
            <person name="Yoshiki S."/>
            <person name="Yoshihara R."/>
            <person name="Yukawa K."/>
            <person name="Zhong H."/>
            <person name="Iwama H."/>
            <person name="Endo T."/>
            <person name="Ito H."/>
            <person name="Hahn J.H."/>
            <person name="Kim H.-I."/>
            <person name="Eun M.-Y."/>
            <person name="Yano M."/>
            <person name="Jiang J."/>
            <person name="Gojobori T."/>
        </authorList>
    </citation>
    <scope>NUCLEOTIDE SEQUENCE [LARGE SCALE GENOMIC DNA]</scope>
    <source>
        <strain>cv. Nipponbare</strain>
    </source>
</reference>
<reference key="4">
    <citation type="journal article" date="2005" name="Nature">
        <title>The map-based sequence of the rice genome.</title>
        <authorList>
            <consortium name="International rice genome sequencing project (IRGSP)"/>
        </authorList>
    </citation>
    <scope>NUCLEOTIDE SEQUENCE [LARGE SCALE GENOMIC DNA]</scope>
    <source>
        <strain>cv. Nipponbare</strain>
    </source>
</reference>
<reference key="5">
    <citation type="journal article" date="2008" name="Nucleic Acids Res.">
        <title>The rice annotation project database (RAP-DB): 2008 update.</title>
        <authorList>
            <consortium name="The rice annotation project (RAP)"/>
        </authorList>
    </citation>
    <scope>GENOME REANNOTATION</scope>
    <source>
        <strain>cv. Nipponbare</strain>
    </source>
</reference>
<reference key="6">
    <citation type="journal article" date="2013" name="Rice">
        <title>Improvement of the Oryza sativa Nipponbare reference genome using next generation sequence and optical map data.</title>
        <authorList>
            <person name="Kawahara Y."/>
            <person name="de la Bastide M."/>
            <person name="Hamilton J.P."/>
            <person name="Kanamori H."/>
            <person name="McCombie W.R."/>
            <person name="Ouyang S."/>
            <person name="Schwartz D.C."/>
            <person name="Tanaka T."/>
            <person name="Wu J."/>
            <person name="Zhou S."/>
            <person name="Childs K.L."/>
            <person name="Davidson R.M."/>
            <person name="Lin H."/>
            <person name="Quesada-Ocampo L."/>
            <person name="Vaillancourt B."/>
            <person name="Sakai H."/>
            <person name="Lee S.S."/>
            <person name="Kim J."/>
            <person name="Numa H."/>
            <person name="Itoh T."/>
            <person name="Buell C.R."/>
            <person name="Matsumoto T."/>
        </authorList>
    </citation>
    <scope>GENOME REANNOTATION</scope>
    <source>
        <strain>cv. Nipponbare</strain>
    </source>
</reference>
<reference key="7">
    <citation type="journal article" date="2005" name="PLoS Biol.">
        <title>The genomes of Oryza sativa: a history of duplications.</title>
        <authorList>
            <person name="Yu J."/>
            <person name="Wang J."/>
            <person name="Lin W."/>
            <person name="Li S."/>
            <person name="Li H."/>
            <person name="Zhou J."/>
            <person name="Ni P."/>
            <person name="Dong W."/>
            <person name="Hu S."/>
            <person name="Zeng C."/>
            <person name="Zhang J."/>
            <person name="Zhang Y."/>
            <person name="Li R."/>
            <person name="Xu Z."/>
            <person name="Li S."/>
            <person name="Li X."/>
            <person name="Zheng H."/>
            <person name="Cong L."/>
            <person name="Lin L."/>
            <person name="Yin J."/>
            <person name="Geng J."/>
            <person name="Li G."/>
            <person name="Shi J."/>
            <person name="Liu J."/>
            <person name="Lv H."/>
            <person name="Li J."/>
            <person name="Wang J."/>
            <person name="Deng Y."/>
            <person name="Ran L."/>
            <person name="Shi X."/>
            <person name="Wang X."/>
            <person name="Wu Q."/>
            <person name="Li C."/>
            <person name="Ren X."/>
            <person name="Wang J."/>
            <person name="Wang X."/>
            <person name="Li D."/>
            <person name="Liu D."/>
            <person name="Zhang X."/>
            <person name="Ji Z."/>
            <person name="Zhao W."/>
            <person name="Sun Y."/>
            <person name="Zhang Z."/>
            <person name="Bao J."/>
            <person name="Han Y."/>
            <person name="Dong L."/>
            <person name="Ji J."/>
            <person name="Chen P."/>
            <person name="Wu S."/>
            <person name="Liu J."/>
            <person name="Xiao Y."/>
            <person name="Bu D."/>
            <person name="Tan J."/>
            <person name="Yang L."/>
            <person name="Ye C."/>
            <person name="Zhang J."/>
            <person name="Xu J."/>
            <person name="Zhou Y."/>
            <person name="Yu Y."/>
            <person name="Zhang B."/>
            <person name="Zhuang S."/>
            <person name="Wei H."/>
            <person name="Liu B."/>
            <person name="Lei M."/>
            <person name="Yu H."/>
            <person name="Li Y."/>
            <person name="Xu H."/>
            <person name="Wei S."/>
            <person name="He X."/>
            <person name="Fang L."/>
            <person name="Zhang Z."/>
            <person name="Zhang Y."/>
            <person name="Huang X."/>
            <person name="Su Z."/>
            <person name="Tong W."/>
            <person name="Li J."/>
            <person name="Tong Z."/>
            <person name="Li S."/>
            <person name="Ye J."/>
            <person name="Wang L."/>
            <person name="Fang L."/>
            <person name="Lei T."/>
            <person name="Chen C.-S."/>
            <person name="Chen H.-C."/>
            <person name="Xu Z."/>
            <person name="Li H."/>
            <person name="Huang H."/>
            <person name="Zhang F."/>
            <person name="Xu H."/>
            <person name="Li N."/>
            <person name="Zhao C."/>
            <person name="Li S."/>
            <person name="Dong L."/>
            <person name="Huang Y."/>
            <person name="Li L."/>
            <person name="Xi Y."/>
            <person name="Qi Q."/>
            <person name="Li W."/>
            <person name="Zhang B."/>
            <person name="Hu W."/>
            <person name="Zhang Y."/>
            <person name="Tian X."/>
            <person name="Jiao Y."/>
            <person name="Liang X."/>
            <person name="Jin J."/>
            <person name="Gao L."/>
            <person name="Zheng W."/>
            <person name="Hao B."/>
            <person name="Liu S.-M."/>
            <person name="Wang W."/>
            <person name="Yuan L."/>
            <person name="Cao M."/>
            <person name="McDermott J."/>
            <person name="Samudrala R."/>
            <person name="Wang J."/>
            <person name="Wong G.K.-S."/>
            <person name="Yang H."/>
        </authorList>
    </citation>
    <scope>NUCLEOTIDE SEQUENCE [LARGE SCALE GENOMIC DNA]</scope>
    <source>
        <strain>cv. Nipponbare</strain>
    </source>
</reference>
<reference key="8">
    <citation type="journal article" date="2013" name="Plant Mol. Biol. Rep.">
        <title>Genome-wide phylogenetic analysis of stress-activated protein kinase genes in rice (OsSAPKs) and expression profiling in response to Xanthomonas oryzae pv. oryzicola infection.</title>
        <authorList>
            <person name="Xu M.-R."/>
            <person name="Huang L.-Y."/>
            <person name="Zhang F."/>
            <person name="Zhu L.-H."/>
            <person name="Zhou Y.-L."/>
            <person name="Li Z.-K."/>
        </authorList>
    </citation>
    <scope>NUCLEOTIDE SEQUENCE [MRNA] OF 193-360</scope>
</reference>
<dbReference type="EC" id="2.7.11.1"/>
<dbReference type="EMBL" id="AB125305">
    <property type="protein sequence ID" value="BAD18000.1"/>
    <property type="molecule type" value="mRNA"/>
</dbReference>
<dbReference type="EMBL" id="JQ001817">
    <property type="protein sequence ID" value="AFK74500.1"/>
    <property type="molecule type" value="mRNA"/>
</dbReference>
<dbReference type="EMBL" id="AP003235">
    <property type="protein sequence ID" value="BAB64101.1"/>
    <property type="molecule type" value="Genomic_DNA"/>
</dbReference>
<dbReference type="EMBL" id="AP003235">
    <property type="protein sequence ID" value="BAD81709.1"/>
    <property type="status" value="ALT_SEQ"/>
    <property type="molecule type" value="Genomic_DNA"/>
</dbReference>
<dbReference type="EMBL" id="AP003286">
    <property type="protein sequence ID" value="BAB89813.1"/>
    <property type="molecule type" value="Genomic_DNA"/>
</dbReference>
<dbReference type="EMBL" id="AP003286">
    <property type="protein sequence ID" value="BAD82014.1"/>
    <property type="status" value="ALT_SEQ"/>
    <property type="molecule type" value="Genomic_DNA"/>
</dbReference>
<dbReference type="EMBL" id="AP008207">
    <property type="protein sequence ID" value="BAF06844.1"/>
    <property type="molecule type" value="Genomic_DNA"/>
</dbReference>
<dbReference type="EMBL" id="AP014957">
    <property type="status" value="NOT_ANNOTATED_CDS"/>
    <property type="molecule type" value="Genomic_DNA"/>
</dbReference>
<dbReference type="EMBL" id="CM000138">
    <property type="protein sequence ID" value="EAZ14302.1"/>
    <property type="molecule type" value="Genomic_DNA"/>
</dbReference>
<dbReference type="EMBL" id="JF733762">
    <property type="protein sequence ID" value="AEF00933.1"/>
    <property type="molecule type" value="mRNA"/>
</dbReference>
<dbReference type="RefSeq" id="XP_015613364.1">
    <property type="nucleotide sequence ID" value="XM_015757878.1"/>
</dbReference>
<dbReference type="SMR" id="Q5N942"/>
<dbReference type="FunCoup" id="Q5N942">
    <property type="interactions" value="427"/>
</dbReference>
<dbReference type="STRING" id="39947.Q5N942"/>
<dbReference type="PaxDb" id="39947-Q5N942"/>
<dbReference type="EnsemblPlants" id="Os01t0869900-01">
    <property type="protein sequence ID" value="Os01t0869900-01"/>
    <property type="gene ID" value="Os01g0869900"/>
</dbReference>
<dbReference type="Gramene" id="Os01t0869900-01">
    <property type="protein sequence ID" value="Os01t0869900-01"/>
    <property type="gene ID" value="Os01g0869900"/>
</dbReference>
<dbReference type="KEGG" id="dosa:Os01g0869900"/>
<dbReference type="eggNOG" id="KOG0583">
    <property type="taxonomic scope" value="Eukaryota"/>
</dbReference>
<dbReference type="InParanoid" id="Q5N942"/>
<dbReference type="OrthoDB" id="193931at2759"/>
<dbReference type="BRENDA" id="2.7.11.1">
    <property type="organism ID" value="4460"/>
</dbReference>
<dbReference type="Proteomes" id="UP000000763">
    <property type="component" value="Chromosome 1"/>
</dbReference>
<dbReference type="Proteomes" id="UP000007752">
    <property type="component" value="Chromosome 1"/>
</dbReference>
<dbReference type="Proteomes" id="UP000059680">
    <property type="component" value="Chromosome 1"/>
</dbReference>
<dbReference type="GO" id="GO:0005737">
    <property type="term" value="C:cytoplasm"/>
    <property type="evidence" value="ECO:0000314"/>
    <property type="project" value="CACAO"/>
</dbReference>
<dbReference type="GO" id="GO:0005634">
    <property type="term" value="C:nucleus"/>
    <property type="evidence" value="ECO:0000314"/>
    <property type="project" value="CACAO"/>
</dbReference>
<dbReference type="GO" id="GO:0005524">
    <property type="term" value="F:ATP binding"/>
    <property type="evidence" value="ECO:0007669"/>
    <property type="project" value="UniProtKB-KW"/>
</dbReference>
<dbReference type="GO" id="GO:0106310">
    <property type="term" value="F:protein serine kinase activity"/>
    <property type="evidence" value="ECO:0007669"/>
    <property type="project" value="RHEA"/>
</dbReference>
<dbReference type="GO" id="GO:0004674">
    <property type="term" value="F:protein serine/threonine kinase activity"/>
    <property type="evidence" value="ECO:0000318"/>
    <property type="project" value="GO_Central"/>
</dbReference>
<dbReference type="GO" id="GO:0009738">
    <property type="term" value="P:abscisic acid-activated signaling pathway"/>
    <property type="evidence" value="ECO:0007669"/>
    <property type="project" value="UniProtKB-KW"/>
</dbReference>
<dbReference type="CDD" id="cd14662">
    <property type="entry name" value="STKc_SnRK2"/>
    <property type="match status" value="1"/>
</dbReference>
<dbReference type="FunFam" id="1.10.510.10:FF:000132">
    <property type="entry name" value="Serine/threonine-protein kinase SRK2A"/>
    <property type="match status" value="1"/>
</dbReference>
<dbReference type="FunFam" id="3.30.200.20:FF:000045">
    <property type="entry name" value="Serine/threonine-protein kinase SRK2E"/>
    <property type="match status" value="1"/>
</dbReference>
<dbReference type="Gene3D" id="3.30.200.20">
    <property type="entry name" value="Phosphorylase Kinase, domain 1"/>
    <property type="match status" value="1"/>
</dbReference>
<dbReference type="Gene3D" id="1.10.510.10">
    <property type="entry name" value="Transferase(Phosphotransferase) domain 1"/>
    <property type="match status" value="1"/>
</dbReference>
<dbReference type="InterPro" id="IPR011009">
    <property type="entry name" value="Kinase-like_dom_sf"/>
</dbReference>
<dbReference type="InterPro" id="IPR000719">
    <property type="entry name" value="Prot_kinase_dom"/>
</dbReference>
<dbReference type="InterPro" id="IPR017441">
    <property type="entry name" value="Protein_kinase_ATP_BS"/>
</dbReference>
<dbReference type="InterPro" id="IPR008271">
    <property type="entry name" value="Ser/Thr_kinase_AS"/>
</dbReference>
<dbReference type="PANTHER" id="PTHR24343">
    <property type="entry name" value="SERINE/THREONINE KINASE"/>
    <property type="match status" value="1"/>
</dbReference>
<dbReference type="PANTHER" id="PTHR24343:SF372">
    <property type="entry name" value="SERINE_THREONINE-PROTEIN KINASE SAPK4"/>
    <property type="match status" value="1"/>
</dbReference>
<dbReference type="Pfam" id="PF00069">
    <property type="entry name" value="Pkinase"/>
    <property type="match status" value="1"/>
</dbReference>
<dbReference type="SMART" id="SM00220">
    <property type="entry name" value="S_TKc"/>
    <property type="match status" value="1"/>
</dbReference>
<dbReference type="SUPFAM" id="SSF56112">
    <property type="entry name" value="Protein kinase-like (PK-like)"/>
    <property type="match status" value="1"/>
</dbReference>
<dbReference type="PROSITE" id="PS00107">
    <property type="entry name" value="PROTEIN_KINASE_ATP"/>
    <property type="match status" value="1"/>
</dbReference>
<dbReference type="PROSITE" id="PS50011">
    <property type="entry name" value="PROTEIN_KINASE_DOM"/>
    <property type="match status" value="1"/>
</dbReference>
<dbReference type="PROSITE" id="PS00108">
    <property type="entry name" value="PROTEIN_KINASE_ST"/>
    <property type="match status" value="1"/>
</dbReference>
<feature type="chain" id="PRO_0000086631" description="Serine/threonine-protein kinase SAPK4">
    <location>
        <begin position="1"/>
        <end position="360"/>
    </location>
</feature>
<feature type="domain" description="Protein kinase" evidence="2">
    <location>
        <begin position="4"/>
        <end position="260"/>
    </location>
</feature>
<feature type="region of interest" description="Disordered" evidence="4">
    <location>
        <begin position="303"/>
        <end position="360"/>
    </location>
</feature>
<feature type="compositionally biased region" description="Acidic residues" evidence="4">
    <location>
        <begin position="317"/>
        <end position="339"/>
    </location>
</feature>
<feature type="compositionally biased region" description="Basic and acidic residues" evidence="4">
    <location>
        <begin position="340"/>
        <end position="351"/>
    </location>
</feature>
<feature type="active site" description="Proton acceptor" evidence="2 3">
    <location>
        <position position="123"/>
    </location>
</feature>
<feature type="binding site" evidence="2">
    <location>
        <begin position="10"/>
        <end position="18"/>
    </location>
    <ligand>
        <name>ATP</name>
        <dbReference type="ChEBI" id="CHEBI:30616"/>
    </ligand>
</feature>
<feature type="binding site" evidence="2">
    <location>
        <position position="33"/>
    </location>
    <ligand>
        <name>ATP</name>
        <dbReference type="ChEBI" id="CHEBI:30616"/>
    </ligand>
</feature>
<keyword id="KW-0938">Abscisic acid signaling pathway</keyword>
<keyword id="KW-0067">ATP-binding</keyword>
<keyword id="KW-0418">Kinase</keyword>
<keyword id="KW-0547">Nucleotide-binding</keyword>
<keyword id="KW-0597">Phosphoprotein</keyword>
<keyword id="KW-1185">Reference proteome</keyword>
<keyword id="KW-0723">Serine/threonine-protein kinase</keyword>
<keyword id="KW-0346">Stress response</keyword>
<keyword id="KW-0808">Transferase</keyword>
<organism>
    <name type="scientific">Oryza sativa subsp. japonica</name>
    <name type="common">Rice</name>
    <dbReference type="NCBI Taxonomy" id="39947"/>
    <lineage>
        <taxon>Eukaryota</taxon>
        <taxon>Viridiplantae</taxon>
        <taxon>Streptophyta</taxon>
        <taxon>Embryophyta</taxon>
        <taxon>Tracheophyta</taxon>
        <taxon>Spermatophyta</taxon>
        <taxon>Magnoliopsida</taxon>
        <taxon>Liliopsida</taxon>
        <taxon>Poales</taxon>
        <taxon>Poaceae</taxon>
        <taxon>BOP clade</taxon>
        <taxon>Oryzoideae</taxon>
        <taxon>Oryzeae</taxon>
        <taxon>Oryzinae</taxon>
        <taxon>Oryza</taxon>
        <taxon>Oryza sativa</taxon>
    </lineage>
</organism>
<gene>
    <name type="primary">SAPK4</name>
    <name type="synonym">RK2</name>
    <name evidence="9" type="ordered locus">Os01g0869900</name>
    <name evidence="7" type="ordered locus">LOC_Os01g64970</name>
    <name evidence="10" type="ORF">OsJ_04228</name>
    <name type="ORF">P0039A07.8-1</name>
    <name type="ORF">P0677H08.40-1</name>
</gene>
<comment type="function">
    <text>May play a role in signal transduction of hyperosmotic response.</text>
</comment>
<comment type="catalytic activity">
    <reaction>
        <text>L-seryl-[protein] + ATP = O-phospho-L-seryl-[protein] + ADP + H(+)</text>
        <dbReference type="Rhea" id="RHEA:17989"/>
        <dbReference type="Rhea" id="RHEA-COMP:9863"/>
        <dbReference type="Rhea" id="RHEA-COMP:11604"/>
        <dbReference type="ChEBI" id="CHEBI:15378"/>
        <dbReference type="ChEBI" id="CHEBI:29999"/>
        <dbReference type="ChEBI" id="CHEBI:30616"/>
        <dbReference type="ChEBI" id="CHEBI:83421"/>
        <dbReference type="ChEBI" id="CHEBI:456216"/>
        <dbReference type="EC" id="2.7.11.1"/>
    </reaction>
</comment>
<comment type="catalytic activity">
    <reaction>
        <text>L-threonyl-[protein] + ATP = O-phospho-L-threonyl-[protein] + ADP + H(+)</text>
        <dbReference type="Rhea" id="RHEA:46608"/>
        <dbReference type="Rhea" id="RHEA-COMP:11060"/>
        <dbReference type="Rhea" id="RHEA-COMP:11605"/>
        <dbReference type="ChEBI" id="CHEBI:15378"/>
        <dbReference type="ChEBI" id="CHEBI:30013"/>
        <dbReference type="ChEBI" id="CHEBI:30616"/>
        <dbReference type="ChEBI" id="CHEBI:61977"/>
        <dbReference type="ChEBI" id="CHEBI:456216"/>
        <dbReference type="EC" id="2.7.11.1"/>
    </reaction>
</comment>
<comment type="activity regulation">
    <text>Activated by hyperosmotic stress.</text>
</comment>
<comment type="tissue specificity">
    <text evidence="5">Expressed in leaf blades, leaf sheaths and roots. Expressed in shoots and roots of young seedlings.</text>
</comment>
<comment type="induction">
    <text evidence="5">By hyperosmotic stress and abscisic acid (ABA) in leaf blades.</text>
</comment>
<comment type="PTM">
    <text evidence="1">May be phosphorylated.</text>
</comment>
<comment type="similarity">
    <text evidence="2">Belongs to the protein kinase superfamily. Ser/Thr protein kinase family.</text>
</comment>
<comment type="sequence caution" evidence="7">
    <conflict type="erroneous gene model prediction">
        <sequence resource="EMBL-CDS" id="BAD81709"/>
    </conflict>
</comment>
<comment type="sequence caution" evidence="7">
    <conflict type="erroneous gene model prediction">
        <sequence resource="EMBL-CDS" id="BAD82014"/>
    </conflict>
</comment>
<accession>Q5N942</accession>
<accession>A0A0U1UA40</accession>
<accession>F6M7C8</accession>
<accession>Q0JHD4</accession>
<accession>Q943J9</accession>